<evidence type="ECO:0000255" key="1">
    <source>
        <dbReference type="HAMAP-Rule" id="MF_00346"/>
    </source>
</evidence>
<keyword id="KW-1185">Reference proteome</keyword>
<gene>
    <name type="ordered locus">XCC3260</name>
</gene>
<protein>
    <recommendedName>
        <fullName evidence="1">UPF0149 protein XCC3260</fullName>
    </recommendedName>
</protein>
<proteinExistence type="inferred from homology"/>
<feature type="chain" id="PRO_0000207575" description="UPF0149 protein XCC3260">
    <location>
        <begin position="1"/>
        <end position="180"/>
    </location>
</feature>
<sequence>MDLPDVAAVQHESRQLDLASSAAELHGGLCGWLSGGGADSADWLARILADTAQVAPAQGGALDQMRQATVAQLEDRDFAFELLLTEDGAPLPARTDALFDWCRAFLGGFGLAAQQRPALSEEGEEALQDLARLAQASSDDFDTAEEDDTALAEIEEFVRVAVLLLHGDCVMGPRFRQRLN</sequence>
<reference key="1">
    <citation type="journal article" date="2002" name="Nature">
        <title>Comparison of the genomes of two Xanthomonas pathogens with differing host specificities.</title>
        <authorList>
            <person name="da Silva A.C.R."/>
            <person name="Ferro J.A."/>
            <person name="Reinach F.C."/>
            <person name="Farah C.S."/>
            <person name="Furlan L.R."/>
            <person name="Quaggio R.B."/>
            <person name="Monteiro-Vitorello C.B."/>
            <person name="Van Sluys M.A."/>
            <person name="Almeida N.F. Jr."/>
            <person name="Alves L.M.C."/>
            <person name="do Amaral A.M."/>
            <person name="Bertolini M.C."/>
            <person name="Camargo L.E.A."/>
            <person name="Camarotte G."/>
            <person name="Cannavan F."/>
            <person name="Cardozo J."/>
            <person name="Chambergo F."/>
            <person name="Ciapina L.P."/>
            <person name="Cicarelli R.M.B."/>
            <person name="Coutinho L.L."/>
            <person name="Cursino-Santos J.R."/>
            <person name="El-Dorry H."/>
            <person name="Faria J.B."/>
            <person name="Ferreira A.J.S."/>
            <person name="Ferreira R.C.C."/>
            <person name="Ferro M.I.T."/>
            <person name="Formighieri E.F."/>
            <person name="Franco M.C."/>
            <person name="Greggio C.C."/>
            <person name="Gruber A."/>
            <person name="Katsuyama A.M."/>
            <person name="Kishi L.T."/>
            <person name="Leite R.P."/>
            <person name="Lemos E.G.M."/>
            <person name="Lemos M.V.F."/>
            <person name="Locali E.C."/>
            <person name="Machado M.A."/>
            <person name="Madeira A.M.B.N."/>
            <person name="Martinez-Rossi N.M."/>
            <person name="Martins E.C."/>
            <person name="Meidanis J."/>
            <person name="Menck C.F.M."/>
            <person name="Miyaki C.Y."/>
            <person name="Moon D.H."/>
            <person name="Moreira L.M."/>
            <person name="Novo M.T.M."/>
            <person name="Okura V.K."/>
            <person name="Oliveira M.C."/>
            <person name="Oliveira V.R."/>
            <person name="Pereira H.A."/>
            <person name="Rossi A."/>
            <person name="Sena J.A.D."/>
            <person name="Silva C."/>
            <person name="de Souza R.F."/>
            <person name="Spinola L.A.F."/>
            <person name="Takita M.A."/>
            <person name="Tamura R.E."/>
            <person name="Teixeira E.C."/>
            <person name="Tezza R.I.D."/>
            <person name="Trindade dos Santos M."/>
            <person name="Truffi D."/>
            <person name="Tsai S.M."/>
            <person name="White F.F."/>
            <person name="Setubal J.C."/>
            <person name="Kitajima J.P."/>
        </authorList>
    </citation>
    <scope>NUCLEOTIDE SEQUENCE [LARGE SCALE GENOMIC DNA]</scope>
    <source>
        <strain>ATCC 33913 / DSM 3586 / NCPPB 528 / LMG 568 / P 25</strain>
    </source>
</reference>
<comment type="similarity">
    <text evidence="1">Belongs to the UPF0149 family.</text>
</comment>
<organism>
    <name type="scientific">Xanthomonas campestris pv. campestris (strain ATCC 33913 / DSM 3586 / NCPPB 528 / LMG 568 / P 25)</name>
    <dbReference type="NCBI Taxonomy" id="190485"/>
    <lineage>
        <taxon>Bacteria</taxon>
        <taxon>Pseudomonadati</taxon>
        <taxon>Pseudomonadota</taxon>
        <taxon>Gammaproteobacteria</taxon>
        <taxon>Lysobacterales</taxon>
        <taxon>Lysobacteraceae</taxon>
        <taxon>Xanthomonas</taxon>
    </lineage>
</organism>
<name>Y3260_XANCP</name>
<accession>Q8P5S6</accession>
<dbReference type="EMBL" id="AE008922">
    <property type="protein sequence ID" value="AAM42530.1"/>
    <property type="molecule type" value="Genomic_DNA"/>
</dbReference>
<dbReference type="RefSeq" id="NP_638606.1">
    <property type="nucleotide sequence ID" value="NC_003902.1"/>
</dbReference>
<dbReference type="RefSeq" id="WP_011038362.1">
    <property type="nucleotide sequence ID" value="NC_003902.1"/>
</dbReference>
<dbReference type="SMR" id="Q8P5S6"/>
<dbReference type="STRING" id="190485.XCC3260"/>
<dbReference type="EnsemblBacteria" id="AAM42530">
    <property type="protein sequence ID" value="AAM42530"/>
    <property type="gene ID" value="XCC3260"/>
</dbReference>
<dbReference type="KEGG" id="xcc:XCC3260"/>
<dbReference type="PATRIC" id="fig|190485.4.peg.3483"/>
<dbReference type="eggNOG" id="COG3079">
    <property type="taxonomic scope" value="Bacteria"/>
</dbReference>
<dbReference type="HOGENOM" id="CLU_085336_0_0_6"/>
<dbReference type="OrthoDB" id="9783391at2"/>
<dbReference type="Proteomes" id="UP000001010">
    <property type="component" value="Chromosome"/>
</dbReference>
<dbReference type="GO" id="GO:0005829">
    <property type="term" value="C:cytosol"/>
    <property type="evidence" value="ECO:0000318"/>
    <property type="project" value="GO_Central"/>
</dbReference>
<dbReference type="Gene3D" id="1.20.120.740">
    <property type="entry name" value="YgfB uncharacterised protein family UPF0149, PF03695"/>
    <property type="match status" value="1"/>
</dbReference>
<dbReference type="HAMAP" id="MF_00346">
    <property type="entry name" value="UPF0149"/>
    <property type="match status" value="1"/>
</dbReference>
<dbReference type="InterPro" id="IPR011978">
    <property type="entry name" value="YgfB-like"/>
</dbReference>
<dbReference type="InterPro" id="IPR036255">
    <property type="entry name" value="YgfB-like_sf"/>
</dbReference>
<dbReference type="NCBIfam" id="NF003405">
    <property type="entry name" value="PRK04758.1"/>
    <property type="match status" value="1"/>
</dbReference>
<dbReference type="PANTHER" id="PTHR37528">
    <property type="entry name" value="UPF0149 PROTEIN YGFB"/>
    <property type="match status" value="1"/>
</dbReference>
<dbReference type="PANTHER" id="PTHR37528:SF1">
    <property type="entry name" value="UPF0149 PROTEIN YGFB"/>
    <property type="match status" value="1"/>
</dbReference>
<dbReference type="Pfam" id="PF03695">
    <property type="entry name" value="UPF0149"/>
    <property type="match status" value="1"/>
</dbReference>
<dbReference type="SUPFAM" id="SSF101327">
    <property type="entry name" value="YgfB-like"/>
    <property type="match status" value="1"/>
</dbReference>